<evidence type="ECO:0000255" key="1"/>
<evidence type="ECO:0000256" key="2">
    <source>
        <dbReference type="SAM" id="MobiDB-lite"/>
    </source>
</evidence>
<evidence type="ECO:0000269" key="3">
    <source>
    </source>
</evidence>
<evidence type="ECO:0000303" key="4">
    <source>
    </source>
</evidence>
<evidence type="ECO:0000305" key="5"/>
<evidence type="ECO:0007744" key="6">
    <source>
        <dbReference type="PDB" id="5YZG"/>
    </source>
</evidence>
<evidence type="ECO:0007744" key="7">
    <source>
    </source>
</evidence>
<evidence type="ECO:0007744" key="8">
    <source>
    </source>
</evidence>
<evidence type="ECO:0007744" key="9">
    <source>
    </source>
</evidence>
<evidence type="ECO:0007744" key="10">
    <source>
    </source>
</evidence>
<evidence type="ECO:0007829" key="11">
    <source>
        <dbReference type="PDB" id="6ZYM"/>
    </source>
</evidence>
<protein>
    <recommendedName>
        <fullName>Pre-mRNA-splicing factor CWC25 homolog</fullName>
    </recommendedName>
    <alternativeName>
        <fullName>Coiled-coil domain-containing protein 49</fullName>
    </alternativeName>
    <alternativeName>
        <fullName>Spliceosome-associated protein homolog CWC25</fullName>
    </alternativeName>
</protein>
<proteinExistence type="evidence at protein level"/>
<comment type="function">
    <text evidence="3">Involved in pre-mRNA splicing as component of the spliceosome.</text>
</comment>
<comment type="subunit">
    <text evidence="3">Identified in the spliceosome C complex.</text>
</comment>
<comment type="interaction">
    <interactant intactId="EBI-746052">
        <id>Q9NXE8</id>
    </interactant>
    <interactant intactId="EBI-11976595">
        <id>Q8IXW7</id>
        <label>FMR1</label>
    </interactant>
    <organismsDiffer>false</organismsDiffer>
    <experiments>3</experiments>
</comment>
<comment type="interaction">
    <interactant intactId="EBI-746052">
        <id>Q9NXE8</id>
    </interactant>
    <interactant intactId="EBI-1047093">
        <id>O76011</id>
        <label>KRT34</label>
    </interactant>
    <organismsDiffer>false</organismsDiffer>
    <experiments>3</experiments>
</comment>
<comment type="interaction">
    <interactant intactId="EBI-746052">
        <id>Q9NXE8</id>
    </interactant>
    <interactant intactId="EBI-81290">
        <id>P19474</id>
        <label>TRIM21</label>
    </interactant>
    <organismsDiffer>false</organismsDiffer>
    <experiments>3</experiments>
</comment>
<comment type="subcellular location">
    <subcellularLocation>
        <location evidence="3">Nucleus</location>
    </subcellularLocation>
</comment>
<comment type="alternative products">
    <event type="alternative splicing"/>
    <isoform>
        <id>Q9NXE8-1</id>
        <name>1</name>
        <sequence type="displayed"/>
    </isoform>
    <isoform>
        <id>Q9NXE8-2</id>
        <name>2</name>
        <sequence type="described" ref="VSP_025797"/>
    </isoform>
</comment>
<comment type="similarity">
    <text evidence="5">Belongs to the CWC25 family.</text>
</comment>
<name>CWC25_HUMAN</name>
<feature type="chain" id="PRO_0000288865" description="Pre-mRNA-splicing factor CWC25 homolog">
    <location>
        <begin position="1"/>
        <end position="425"/>
    </location>
</feature>
<feature type="region of interest" description="Disordered" evidence="2">
    <location>
        <begin position="146"/>
        <end position="343"/>
    </location>
</feature>
<feature type="coiled-coil region" evidence="1">
    <location>
        <begin position="20"/>
        <end position="70"/>
    </location>
</feature>
<feature type="coiled-coil region" evidence="1">
    <location>
        <begin position="333"/>
        <end position="377"/>
    </location>
</feature>
<feature type="compositionally biased region" description="Basic residues" evidence="2">
    <location>
        <begin position="175"/>
        <end position="193"/>
    </location>
</feature>
<feature type="compositionally biased region" description="Basic residues" evidence="2">
    <location>
        <begin position="251"/>
        <end position="274"/>
    </location>
</feature>
<feature type="compositionally biased region" description="Basic residues" evidence="2">
    <location>
        <begin position="284"/>
        <end position="306"/>
    </location>
</feature>
<feature type="modified residue" description="Phosphoserine" evidence="9">
    <location>
        <position position="170"/>
    </location>
</feature>
<feature type="modified residue" description="Phosphoserine" evidence="7 8 9">
    <location>
        <position position="218"/>
    </location>
</feature>
<feature type="modified residue" description="Phosphoserine" evidence="7">
    <location>
        <position position="222"/>
    </location>
</feature>
<feature type="cross-link" description="Glycyl lysine isopeptide (Lys-Gly) (interchain with G-Cter in SUMO2)" evidence="10">
    <location>
        <position position="391"/>
    </location>
</feature>
<feature type="splice variant" id="VSP_025797" description="In isoform 2." evidence="4">
    <location>
        <begin position="1"/>
        <end position="347"/>
    </location>
</feature>
<feature type="helix" evidence="11">
    <location>
        <begin position="6"/>
        <end position="9"/>
    </location>
</feature>
<feature type="strand" evidence="11">
    <location>
        <begin position="10"/>
        <end position="12"/>
    </location>
</feature>
<feature type="helix" evidence="11">
    <location>
        <begin position="17"/>
        <end position="53"/>
    </location>
</feature>
<feature type="helix" evidence="11">
    <location>
        <begin position="54"/>
        <end position="56"/>
    </location>
</feature>
<organism>
    <name type="scientific">Homo sapiens</name>
    <name type="common">Human</name>
    <dbReference type="NCBI Taxonomy" id="9606"/>
    <lineage>
        <taxon>Eukaryota</taxon>
        <taxon>Metazoa</taxon>
        <taxon>Chordata</taxon>
        <taxon>Craniata</taxon>
        <taxon>Vertebrata</taxon>
        <taxon>Euteleostomi</taxon>
        <taxon>Mammalia</taxon>
        <taxon>Eutheria</taxon>
        <taxon>Euarchontoglires</taxon>
        <taxon>Primates</taxon>
        <taxon>Haplorrhini</taxon>
        <taxon>Catarrhini</taxon>
        <taxon>Hominidae</taxon>
        <taxon>Homo</taxon>
    </lineage>
</organism>
<sequence length="425" mass="49647">MGGGDLNLKKSWHPQTLRNVEKVWKAEQKHEAERKKIEELQRELREERAREEMQRYAEDVGAVKKKEEKLDWMYQGPGGMVNRDEYLLGRPIDKYVFEKMEEKEAGCSSETGLLPGSIFAPSGANSLLDMASKIREDPLFIIRKKEEEKKREVLNNPVKMKKIKELLQMSLEKKEKKKKKEKKKKHKKHKHRSSSSDRSSSEDEHSAGRSQKKMANSSPVLSKVPGYGLQVRNSDRNQGLQGPLTAEQKRGHGMKNHSRSRSSSHSPPRHASKKSTREAGSRDRRSRSLGRRSRSPRPSKLHNSKVNRRETGQTRSPSPKKEVYQRRHAPGYTRKLSAEELERKRQEMMENAKWREEERLNILKRHAKDEEREQRLEKLDSRDGKFIHRMKLESASTSSLEDRVKRNIYSLQRTSVALEKNFMKR</sequence>
<accession>Q9NXE8</accession>
<accession>A0JLM3</accession>
<accession>Q68DK5</accession>
<gene>
    <name type="primary">CWC25</name>
    <name type="synonym">CCDC49</name>
</gene>
<reference key="1">
    <citation type="journal article" date="2004" name="Nat. Genet.">
        <title>Complete sequencing and characterization of 21,243 full-length human cDNAs.</title>
        <authorList>
            <person name="Ota T."/>
            <person name="Suzuki Y."/>
            <person name="Nishikawa T."/>
            <person name="Otsuki T."/>
            <person name="Sugiyama T."/>
            <person name="Irie R."/>
            <person name="Wakamatsu A."/>
            <person name="Hayashi K."/>
            <person name="Sato H."/>
            <person name="Nagai K."/>
            <person name="Kimura K."/>
            <person name="Makita H."/>
            <person name="Sekine M."/>
            <person name="Obayashi M."/>
            <person name="Nishi T."/>
            <person name="Shibahara T."/>
            <person name="Tanaka T."/>
            <person name="Ishii S."/>
            <person name="Yamamoto J."/>
            <person name="Saito K."/>
            <person name="Kawai Y."/>
            <person name="Isono Y."/>
            <person name="Nakamura Y."/>
            <person name="Nagahari K."/>
            <person name="Murakami K."/>
            <person name="Yasuda T."/>
            <person name="Iwayanagi T."/>
            <person name="Wagatsuma M."/>
            <person name="Shiratori A."/>
            <person name="Sudo H."/>
            <person name="Hosoiri T."/>
            <person name="Kaku Y."/>
            <person name="Kodaira H."/>
            <person name="Kondo H."/>
            <person name="Sugawara M."/>
            <person name="Takahashi M."/>
            <person name="Kanda K."/>
            <person name="Yokoi T."/>
            <person name="Furuya T."/>
            <person name="Kikkawa E."/>
            <person name="Omura Y."/>
            <person name="Abe K."/>
            <person name="Kamihara K."/>
            <person name="Katsuta N."/>
            <person name="Sato K."/>
            <person name="Tanikawa M."/>
            <person name="Yamazaki M."/>
            <person name="Ninomiya K."/>
            <person name="Ishibashi T."/>
            <person name="Yamashita H."/>
            <person name="Murakawa K."/>
            <person name="Fujimori K."/>
            <person name="Tanai H."/>
            <person name="Kimata M."/>
            <person name="Watanabe M."/>
            <person name="Hiraoka S."/>
            <person name="Chiba Y."/>
            <person name="Ishida S."/>
            <person name="Ono Y."/>
            <person name="Takiguchi S."/>
            <person name="Watanabe S."/>
            <person name="Yosida M."/>
            <person name="Hotuta T."/>
            <person name="Kusano J."/>
            <person name="Kanehori K."/>
            <person name="Takahashi-Fujii A."/>
            <person name="Hara H."/>
            <person name="Tanase T.-O."/>
            <person name="Nomura Y."/>
            <person name="Togiya S."/>
            <person name="Komai F."/>
            <person name="Hara R."/>
            <person name="Takeuchi K."/>
            <person name="Arita M."/>
            <person name="Imose N."/>
            <person name="Musashino K."/>
            <person name="Yuuki H."/>
            <person name="Oshima A."/>
            <person name="Sasaki N."/>
            <person name="Aotsuka S."/>
            <person name="Yoshikawa Y."/>
            <person name="Matsunawa H."/>
            <person name="Ichihara T."/>
            <person name="Shiohata N."/>
            <person name="Sano S."/>
            <person name="Moriya S."/>
            <person name="Momiyama H."/>
            <person name="Satoh N."/>
            <person name="Takami S."/>
            <person name="Terashima Y."/>
            <person name="Suzuki O."/>
            <person name="Nakagawa S."/>
            <person name="Senoh A."/>
            <person name="Mizoguchi H."/>
            <person name="Goto Y."/>
            <person name="Shimizu F."/>
            <person name="Wakebe H."/>
            <person name="Hishigaki H."/>
            <person name="Watanabe T."/>
            <person name="Sugiyama A."/>
            <person name="Takemoto M."/>
            <person name="Kawakami B."/>
            <person name="Yamazaki M."/>
            <person name="Watanabe K."/>
            <person name="Kumagai A."/>
            <person name="Itakura S."/>
            <person name="Fukuzumi Y."/>
            <person name="Fujimori Y."/>
            <person name="Komiyama M."/>
            <person name="Tashiro H."/>
            <person name="Tanigami A."/>
            <person name="Fujiwara T."/>
            <person name="Ono T."/>
            <person name="Yamada K."/>
            <person name="Fujii Y."/>
            <person name="Ozaki K."/>
            <person name="Hirao M."/>
            <person name="Ohmori Y."/>
            <person name="Kawabata A."/>
            <person name="Hikiji T."/>
            <person name="Kobatake N."/>
            <person name="Inagaki H."/>
            <person name="Ikema Y."/>
            <person name="Okamoto S."/>
            <person name="Okitani R."/>
            <person name="Kawakami T."/>
            <person name="Noguchi S."/>
            <person name="Itoh T."/>
            <person name="Shigeta K."/>
            <person name="Senba T."/>
            <person name="Matsumura K."/>
            <person name="Nakajima Y."/>
            <person name="Mizuno T."/>
            <person name="Morinaga M."/>
            <person name="Sasaki M."/>
            <person name="Togashi T."/>
            <person name="Oyama M."/>
            <person name="Hata H."/>
            <person name="Watanabe M."/>
            <person name="Komatsu T."/>
            <person name="Mizushima-Sugano J."/>
            <person name="Satoh T."/>
            <person name="Shirai Y."/>
            <person name="Takahashi Y."/>
            <person name="Nakagawa K."/>
            <person name="Okumura K."/>
            <person name="Nagase T."/>
            <person name="Nomura N."/>
            <person name="Kikuchi H."/>
            <person name="Masuho Y."/>
            <person name="Yamashita R."/>
            <person name="Nakai K."/>
            <person name="Yada T."/>
            <person name="Nakamura Y."/>
            <person name="Ohara O."/>
            <person name="Isogai T."/>
            <person name="Sugano S."/>
        </authorList>
    </citation>
    <scope>NUCLEOTIDE SEQUENCE [LARGE SCALE MRNA] (ISOFORM 1)</scope>
    <source>
        <tissue>Hepatoma</tissue>
    </source>
</reference>
<reference key="2">
    <citation type="journal article" date="2007" name="BMC Genomics">
        <title>The full-ORF clone resource of the German cDNA consortium.</title>
        <authorList>
            <person name="Bechtel S."/>
            <person name="Rosenfelder H."/>
            <person name="Duda A."/>
            <person name="Schmidt C.P."/>
            <person name="Ernst U."/>
            <person name="Wellenreuther R."/>
            <person name="Mehrle A."/>
            <person name="Schuster C."/>
            <person name="Bahr A."/>
            <person name="Bloecker H."/>
            <person name="Heubner D."/>
            <person name="Hoerlein A."/>
            <person name="Michel G."/>
            <person name="Wedler H."/>
            <person name="Koehrer K."/>
            <person name="Ottenwaelder B."/>
            <person name="Poustka A."/>
            <person name="Wiemann S."/>
            <person name="Schupp I."/>
        </authorList>
    </citation>
    <scope>NUCLEOTIDE SEQUENCE [LARGE SCALE MRNA] (ISOFORM 2)</scope>
    <source>
        <tissue>Liver</tissue>
    </source>
</reference>
<reference key="3">
    <citation type="journal article" date="2004" name="Genome Res.">
        <title>The status, quality, and expansion of the NIH full-length cDNA project: the Mammalian Gene Collection (MGC).</title>
        <authorList>
            <consortium name="The MGC Project Team"/>
        </authorList>
    </citation>
    <scope>NUCLEOTIDE SEQUENCE [LARGE SCALE MRNA] (ISOFORM 1)</scope>
    <source>
        <tissue>Eye</tissue>
        <tissue>Uterus</tissue>
    </source>
</reference>
<reference key="4">
    <citation type="journal article" date="2008" name="Proc. Natl. Acad. Sci. U.S.A.">
        <title>A quantitative atlas of mitotic phosphorylation.</title>
        <authorList>
            <person name="Dephoure N."/>
            <person name="Zhou C."/>
            <person name="Villen J."/>
            <person name="Beausoleil S.A."/>
            <person name="Bakalarski C.E."/>
            <person name="Elledge S.J."/>
            <person name="Gygi S.P."/>
        </authorList>
    </citation>
    <scope>IDENTIFICATION BY MASS SPECTROMETRY [LARGE SCALE ANALYSIS]</scope>
    <source>
        <tissue>Cervix carcinoma</tissue>
    </source>
</reference>
<reference key="5">
    <citation type="journal article" date="2010" name="Sci. Signal.">
        <title>Quantitative phosphoproteomics reveals widespread full phosphorylation site occupancy during mitosis.</title>
        <authorList>
            <person name="Olsen J.V."/>
            <person name="Vermeulen M."/>
            <person name="Santamaria A."/>
            <person name="Kumar C."/>
            <person name="Miller M.L."/>
            <person name="Jensen L.J."/>
            <person name="Gnad F."/>
            <person name="Cox J."/>
            <person name="Jensen T.S."/>
            <person name="Nigg E.A."/>
            <person name="Brunak S."/>
            <person name="Mann M."/>
        </authorList>
    </citation>
    <scope>PHOSPHORYLATION [LARGE SCALE ANALYSIS] AT SER-218 AND SER-222</scope>
    <scope>IDENTIFICATION BY MASS SPECTROMETRY [LARGE SCALE ANALYSIS]</scope>
    <source>
        <tissue>Cervix carcinoma</tissue>
    </source>
</reference>
<reference key="6">
    <citation type="journal article" date="2011" name="Sci. Signal.">
        <title>System-wide temporal characterization of the proteome and phosphoproteome of human embryonic stem cell differentiation.</title>
        <authorList>
            <person name="Rigbolt K.T."/>
            <person name="Prokhorova T.A."/>
            <person name="Akimov V."/>
            <person name="Henningsen J."/>
            <person name="Johansen P.T."/>
            <person name="Kratchmarova I."/>
            <person name="Kassem M."/>
            <person name="Mann M."/>
            <person name="Olsen J.V."/>
            <person name="Blagoev B."/>
        </authorList>
    </citation>
    <scope>PHOSPHORYLATION [LARGE SCALE ANALYSIS] AT SER-218</scope>
    <scope>IDENTIFICATION BY MASS SPECTROMETRY [LARGE SCALE ANALYSIS]</scope>
</reference>
<reference key="7">
    <citation type="journal article" date="2013" name="J. Proteome Res.">
        <title>Toward a comprehensive characterization of a human cancer cell phosphoproteome.</title>
        <authorList>
            <person name="Zhou H."/>
            <person name="Di Palma S."/>
            <person name="Preisinger C."/>
            <person name="Peng M."/>
            <person name="Polat A.N."/>
            <person name="Heck A.J."/>
            <person name="Mohammed S."/>
        </authorList>
    </citation>
    <scope>PHOSPHORYLATION [LARGE SCALE ANALYSIS] AT SER-170 AND SER-218</scope>
    <scope>IDENTIFICATION BY MASS SPECTROMETRY [LARGE SCALE ANALYSIS]</scope>
    <source>
        <tissue>Cervix carcinoma</tissue>
        <tissue>Erythroleukemia</tissue>
    </source>
</reference>
<reference key="8">
    <citation type="journal article" date="2017" name="Nat. Struct. Mol. Biol.">
        <title>Site-specific mapping of the human SUMO proteome reveals co-modification with phosphorylation.</title>
        <authorList>
            <person name="Hendriks I.A."/>
            <person name="Lyon D."/>
            <person name="Young C."/>
            <person name="Jensen L.J."/>
            <person name="Vertegaal A.C."/>
            <person name="Nielsen M.L."/>
        </authorList>
    </citation>
    <scope>SUMOYLATION [LARGE SCALE ANALYSIS] AT LYS-391</scope>
    <scope>IDENTIFICATION BY MASS SPECTROMETRY [LARGE SCALE ANALYSIS]</scope>
</reference>
<reference evidence="6" key="9">
    <citation type="journal article" date="2018" name="Science">
        <title>Structure of a human catalytic step I spliceosome.</title>
        <authorList>
            <person name="Zhan X."/>
            <person name="Yan C."/>
            <person name="Zhang X."/>
            <person name="Lei J."/>
            <person name="Shi Y."/>
        </authorList>
    </citation>
    <scope>STRUCTURE BY ELECTRON MICROSCOPY (4.10 ANGSTROMS)</scope>
    <scope>FUNCTION</scope>
    <scope>SUBUNIT</scope>
    <scope>SUBCELLULAR LOCATION</scope>
</reference>
<keyword id="KW-0002">3D-structure</keyword>
<keyword id="KW-0025">Alternative splicing</keyword>
<keyword id="KW-0175">Coiled coil</keyword>
<keyword id="KW-1017">Isopeptide bond</keyword>
<keyword id="KW-0507">mRNA processing</keyword>
<keyword id="KW-0508">mRNA splicing</keyword>
<keyword id="KW-0539">Nucleus</keyword>
<keyword id="KW-0597">Phosphoprotein</keyword>
<keyword id="KW-1267">Proteomics identification</keyword>
<keyword id="KW-1185">Reference proteome</keyword>
<keyword id="KW-0747">Spliceosome</keyword>
<keyword id="KW-0832">Ubl conjugation</keyword>
<dbReference type="EMBL" id="AK000298">
    <property type="protein sequence ID" value="BAA91065.1"/>
    <property type="molecule type" value="mRNA"/>
</dbReference>
<dbReference type="EMBL" id="CR749362">
    <property type="protein sequence ID" value="CAH18215.1"/>
    <property type="molecule type" value="mRNA"/>
</dbReference>
<dbReference type="EMBL" id="BC003085">
    <property type="protein sequence ID" value="AAH03085.1"/>
    <property type="status" value="ALT_TERM"/>
    <property type="molecule type" value="mRNA"/>
</dbReference>
<dbReference type="EMBL" id="BC008833">
    <property type="protein sequence ID" value="AAH08833.1"/>
    <property type="molecule type" value="mRNA"/>
</dbReference>
<dbReference type="CCDS" id="CCDS45663.1">
    <molecule id="Q9NXE8-1"/>
</dbReference>
<dbReference type="RefSeq" id="NP_060218.1">
    <molecule id="Q9NXE8-1"/>
    <property type="nucleotide sequence ID" value="NM_017748.5"/>
</dbReference>
<dbReference type="PDB" id="5YZG">
    <property type="method" value="EM"/>
    <property type="resolution" value="4.10 A"/>
    <property type="chains" value="X=1-425"/>
</dbReference>
<dbReference type="PDB" id="6ZYM">
    <property type="method" value="EM"/>
    <property type="resolution" value="3.40 A"/>
    <property type="chains" value="t=1-425"/>
</dbReference>
<dbReference type="PDB" id="8I0W">
    <property type="method" value="EM"/>
    <property type="resolution" value="3.40 A"/>
    <property type="chains" value="X=1-425"/>
</dbReference>
<dbReference type="PDBsum" id="5YZG"/>
<dbReference type="PDBsum" id="6ZYM"/>
<dbReference type="PDBsum" id="8I0W"/>
<dbReference type="EMDB" id="EMD-11569"/>
<dbReference type="EMDB" id="EMD-35113"/>
<dbReference type="EMDB" id="EMD-6864"/>
<dbReference type="SMR" id="Q9NXE8"/>
<dbReference type="BioGRID" id="120231">
    <property type="interactions" value="60"/>
</dbReference>
<dbReference type="CORUM" id="Q9NXE8"/>
<dbReference type="FunCoup" id="Q9NXE8">
    <property type="interactions" value="2694"/>
</dbReference>
<dbReference type="IntAct" id="Q9NXE8">
    <property type="interactions" value="46"/>
</dbReference>
<dbReference type="MINT" id="Q9NXE8"/>
<dbReference type="STRING" id="9606.ENSP00000478070"/>
<dbReference type="GlyGen" id="Q9NXE8">
    <property type="glycosylation" value="2 sites, 1 O-linked glycan (2 sites)"/>
</dbReference>
<dbReference type="iPTMnet" id="Q9NXE8"/>
<dbReference type="PhosphoSitePlus" id="Q9NXE8"/>
<dbReference type="BioMuta" id="CWC25"/>
<dbReference type="DMDM" id="74734693"/>
<dbReference type="jPOST" id="Q9NXE8"/>
<dbReference type="MassIVE" id="Q9NXE8"/>
<dbReference type="PaxDb" id="9606-ENSP00000478070"/>
<dbReference type="PeptideAtlas" id="Q9NXE8"/>
<dbReference type="ProteomicsDB" id="83084">
    <molecule id="Q9NXE8-1"/>
</dbReference>
<dbReference type="ProteomicsDB" id="83085">
    <molecule id="Q9NXE8-2"/>
</dbReference>
<dbReference type="Pumba" id="Q9NXE8"/>
<dbReference type="Antibodypedia" id="74912">
    <property type="antibodies" value="25 antibodies from 11 providers"/>
</dbReference>
<dbReference type="DNASU" id="54883"/>
<dbReference type="Ensembl" id="ENST00000614790.5">
    <molecule id="Q9NXE8-1"/>
    <property type="protein sequence ID" value="ENSP00000478070.1"/>
    <property type="gene ID" value="ENSG00000273559.5"/>
</dbReference>
<dbReference type="Ensembl" id="ENST00000614868.2">
    <molecule id="Q9NXE8-1"/>
    <property type="protein sequence ID" value="ENSP00000477799.1"/>
    <property type="gene ID" value="ENSG00000276761.2"/>
</dbReference>
<dbReference type="GeneID" id="54883"/>
<dbReference type="KEGG" id="hsa:54883"/>
<dbReference type="MANE-Select" id="ENST00000614790.5">
    <property type="protein sequence ID" value="ENSP00000478070.1"/>
    <property type="RefSeq nucleotide sequence ID" value="NM_017748.5"/>
    <property type="RefSeq protein sequence ID" value="NP_060218.1"/>
</dbReference>
<dbReference type="UCSC" id="uc002hqu.5">
    <molecule id="Q9NXE8-1"/>
    <property type="organism name" value="human"/>
</dbReference>
<dbReference type="AGR" id="HGNC:25989"/>
<dbReference type="CTD" id="54883"/>
<dbReference type="DisGeNET" id="54883"/>
<dbReference type="GeneCards" id="CWC25"/>
<dbReference type="HGNC" id="HGNC:25989">
    <property type="gene designation" value="CWC25"/>
</dbReference>
<dbReference type="HPA" id="ENSG00000273559">
    <property type="expression patterns" value="Tissue enhanced (bone)"/>
</dbReference>
<dbReference type="neXtProt" id="NX_Q9NXE8"/>
<dbReference type="OpenTargets" id="ENSG00000273559"/>
<dbReference type="PharmGKB" id="PA165431769"/>
<dbReference type="VEuPathDB" id="HostDB:ENSG00000273559"/>
<dbReference type="eggNOG" id="KOG3869">
    <property type="taxonomic scope" value="Eukaryota"/>
</dbReference>
<dbReference type="GeneTree" id="ENSGT00440000039055"/>
<dbReference type="HOGENOM" id="CLU_025093_1_0_1"/>
<dbReference type="InParanoid" id="Q9NXE8"/>
<dbReference type="OMA" id="SWHPHTM"/>
<dbReference type="OrthoDB" id="21123at2759"/>
<dbReference type="PAN-GO" id="Q9NXE8">
    <property type="GO annotations" value="2 GO annotations based on evolutionary models"/>
</dbReference>
<dbReference type="PhylomeDB" id="Q9NXE8"/>
<dbReference type="TreeFam" id="TF320801"/>
<dbReference type="PathwayCommons" id="Q9NXE8"/>
<dbReference type="Reactome" id="R-HSA-72163">
    <property type="pathway name" value="mRNA Splicing - Major Pathway"/>
</dbReference>
<dbReference type="SignaLink" id="Q9NXE8"/>
<dbReference type="BioGRID-ORCS" id="54883">
    <property type="hits" value="296 hits in 1153 CRISPR screens"/>
</dbReference>
<dbReference type="ChiTaRS" id="CWC25">
    <property type="organism name" value="human"/>
</dbReference>
<dbReference type="GenomeRNAi" id="54883"/>
<dbReference type="Pharos" id="Q9NXE8">
    <property type="development level" value="Tdark"/>
</dbReference>
<dbReference type="PRO" id="PR:Q9NXE8"/>
<dbReference type="Proteomes" id="UP000005640">
    <property type="component" value="Chromosome 17"/>
</dbReference>
<dbReference type="RNAct" id="Q9NXE8">
    <property type="molecule type" value="protein"/>
</dbReference>
<dbReference type="Bgee" id="ENSG00000273559">
    <property type="expression patterns" value="Expressed in sural nerve and 97 other cell types or tissues"/>
</dbReference>
<dbReference type="ExpressionAtlas" id="Q9NXE8">
    <property type="expression patterns" value="baseline and differential"/>
</dbReference>
<dbReference type="GO" id="GO:0016607">
    <property type="term" value="C:nuclear speck"/>
    <property type="evidence" value="ECO:0000314"/>
    <property type="project" value="HPA"/>
</dbReference>
<dbReference type="GO" id="GO:0005654">
    <property type="term" value="C:nucleoplasm"/>
    <property type="evidence" value="ECO:0000304"/>
    <property type="project" value="Reactome"/>
</dbReference>
<dbReference type="GO" id="GO:0005634">
    <property type="term" value="C:nucleus"/>
    <property type="evidence" value="ECO:0000314"/>
    <property type="project" value="UniProtKB"/>
</dbReference>
<dbReference type="GO" id="GO:0071006">
    <property type="term" value="C:U2-type catalytic step 1 spliceosome"/>
    <property type="evidence" value="ECO:0000314"/>
    <property type="project" value="UniProtKB"/>
</dbReference>
<dbReference type="GO" id="GO:0005684">
    <property type="term" value="C:U2-type spliceosomal complex"/>
    <property type="evidence" value="ECO:0000318"/>
    <property type="project" value="GO_Central"/>
</dbReference>
<dbReference type="GO" id="GO:0000398">
    <property type="term" value="P:mRNA splicing, via spliceosome"/>
    <property type="evidence" value="ECO:0000314"/>
    <property type="project" value="UniProtKB"/>
</dbReference>
<dbReference type="InterPro" id="IPR019339">
    <property type="entry name" value="CIR_N_dom"/>
</dbReference>
<dbReference type="InterPro" id="IPR022209">
    <property type="entry name" value="CWC25"/>
</dbReference>
<dbReference type="InterPro" id="IPR051376">
    <property type="entry name" value="CWC25_splicing_factor"/>
</dbReference>
<dbReference type="PANTHER" id="PTHR16196">
    <property type="entry name" value="CELL CYCLE CONTROL PROTEIN CWF25"/>
    <property type="match status" value="1"/>
</dbReference>
<dbReference type="PANTHER" id="PTHR16196:SF0">
    <property type="entry name" value="PRE-MRNA-SPLICING FACTOR CWC25 HOMOLOG"/>
    <property type="match status" value="1"/>
</dbReference>
<dbReference type="Pfam" id="PF10197">
    <property type="entry name" value="Cir_N"/>
    <property type="match status" value="1"/>
</dbReference>
<dbReference type="Pfam" id="PF12542">
    <property type="entry name" value="CWC25"/>
    <property type="match status" value="1"/>
</dbReference>
<dbReference type="SMART" id="SM01083">
    <property type="entry name" value="Cir_N"/>
    <property type="match status" value="1"/>
</dbReference>